<name>MATK_LABPU</name>
<sequence length="504" mass="60970">MEQYQAYLELRRSRYQDILYPLFFRESIYGLAYGHESFFTENVDYNNKFSLLIXQRXSTRMYQQTHFSLCANDSNKNTFVGYNYNFDSQIILEGFGVVVEILFSLQLFISSLRGLEIVKSYQNLQSIHSIFPFFEDKLIYLNHKSDIRIPYPIHLEIXXXXXXXXXXXXXFFHLIRLFFYYYYNWNSLFPPKKRISTFFSKRNLRIFLFLYNLYVWEYESIFLFLRNKCSQLQLKHFLVFFERIFFYEKRKHLVEVSTKTCSYTLFFFKDTFIHYVRYKGKSILVLKNTPLLINKWKYYFIYLWQCHFDIWAGPGTIYINQLSQXSFHFLGYFLSXXXXXXXXXXXXXXXXXXXXXXXXXXXXXXXXXXXXXXXXXXXXXXXXXXXXXXXXXANFSDFDILDRFLRICRNFSHYYNGSAKKKSFYQIKYILRFSCIKTLARKHKSTVRTFLKKLSSEKLLEEFFTEEDLFSLIFPRTSFTLRGVYRGRIWYLDIFFRNDFVNHF</sequence>
<organism>
    <name type="scientific">Lablab purpureus</name>
    <name type="common">Hyacinth bean</name>
    <name type="synonym">Dolichos lablab</name>
    <dbReference type="NCBI Taxonomy" id="35936"/>
    <lineage>
        <taxon>Eukaryota</taxon>
        <taxon>Viridiplantae</taxon>
        <taxon>Streptophyta</taxon>
        <taxon>Embryophyta</taxon>
        <taxon>Tracheophyta</taxon>
        <taxon>Spermatophyta</taxon>
        <taxon>Magnoliopsida</taxon>
        <taxon>eudicotyledons</taxon>
        <taxon>Gunneridae</taxon>
        <taxon>Pentapetalae</taxon>
        <taxon>rosids</taxon>
        <taxon>fabids</taxon>
        <taxon>Fabales</taxon>
        <taxon>Fabaceae</taxon>
        <taxon>Papilionoideae</taxon>
        <taxon>50 kb inversion clade</taxon>
        <taxon>NPAAA clade</taxon>
        <taxon>indigoferoid/millettioid clade</taxon>
        <taxon>Phaseoleae</taxon>
        <taxon>Lablab</taxon>
    </lineage>
</organism>
<accession>Q6PSC4</accession>
<dbReference type="EMBL" id="AY582989">
    <property type="protein sequence ID" value="AAS94288.1"/>
    <property type="molecule type" value="Genomic_DNA"/>
</dbReference>
<dbReference type="GO" id="GO:0009507">
    <property type="term" value="C:chloroplast"/>
    <property type="evidence" value="ECO:0007669"/>
    <property type="project" value="UniProtKB-SubCell"/>
</dbReference>
<dbReference type="GO" id="GO:0003723">
    <property type="term" value="F:RNA binding"/>
    <property type="evidence" value="ECO:0007669"/>
    <property type="project" value="UniProtKB-KW"/>
</dbReference>
<dbReference type="GO" id="GO:0006397">
    <property type="term" value="P:mRNA processing"/>
    <property type="evidence" value="ECO:0007669"/>
    <property type="project" value="UniProtKB-KW"/>
</dbReference>
<dbReference type="GO" id="GO:0008380">
    <property type="term" value="P:RNA splicing"/>
    <property type="evidence" value="ECO:0007669"/>
    <property type="project" value="UniProtKB-UniRule"/>
</dbReference>
<dbReference type="GO" id="GO:0008033">
    <property type="term" value="P:tRNA processing"/>
    <property type="evidence" value="ECO:0007669"/>
    <property type="project" value="UniProtKB-KW"/>
</dbReference>
<dbReference type="HAMAP" id="MF_01390">
    <property type="entry name" value="MatK"/>
    <property type="match status" value="1"/>
</dbReference>
<dbReference type="InterPro" id="IPR024937">
    <property type="entry name" value="Domain_X"/>
</dbReference>
<dbReference type="InterPro" id="IPR002866">
    <property type="entry name" value="Maturase_MatK"/>
</dbReference>
<dbReference type="InterPro" id="IPR024942">
    <property type="entry name" value="Maturase_MatK_N"/>
</dbReference>
<dbReference type="PANTHER" id="PTHR34811">
    <property type="entry name" value="MATURASE K"/>
    <property type="match status" value="1"/>
</dbReference>
<dbReference type="PANTHER" id="PTHR34811:SF1">
    <property type="entry name" value="MATURASE K"/>
    <property type="match status" value="1"/>
</dbReference>
<dbReference type="Pfam" id="PF01348">
    <property type="entry name" value="Intron_maturas2"/>
    <property type="match status" value="1"/>
</dbReference>
<dbReference type="Pfam" id="PF01824">
    <property type="entry name" value="MatK_N"/>
    <property type="match status" value="1"/>
</dbReference>
<gene>
    <name evidence="1" type="primary">matK</name>
</gene>
<proteinExistence type="inferred from homology"/>
<reference key="1">
    <citation type="journal article" date="2004" name="Syst. Bot.">
        <title>Phylogeny and biogeography of Wajira (Leguminosae): a monophyletic segregate of Vigna centered in the horn of Africa region.</title>
        <authorList>
            <person name="Thulin M."/>
            <person name="Lavin M."/>
            <person name="Pasquet R."/>
            <person name="Delgado-Salinas A."/>
        </authorList>
        <dbReference type="AGRICOLA" id="IND43667961"/>
    </citation>
    <scope>NUCLEOTIDE SEQUENCE [GENOMIC DNA]</scope>
</reference>
<keyword id="KW-0150">Chloroplast</keyword>
<keyword id="KW-0507">mRNA processing</keyword>
<keyword id="KW-0934">Plastid</keyword>
<keyword id="KW-0694">RNA-binding</keyword>
<keyword id="KW-0819">tRNA processing</keyword>
<comment type="function">
    <text evidence="1">Usually encoded in the trnK tRNA gene intron. Probably assists in splicing its own and other chloroplast group II introns.</text>
</comment>
<comment type="subcellular location">
    <subcellularLocation>
        <location>Plastid</location>
        <location>Chloroplast</location>
    </subcellularLocation>
</comment>
<comment type="similarity">
    <text evidence="1">Belongs to the intron maturase 2 family. MatK subfamily.</text>
</comment>
<feature type="chain" id="PRO_0000143364" description="Maturase K">
    <location>
        <begin position="1"/>
        <end position="504"/>
    </location>
</feature>
<evidence type="ECO:0000255" key="1">
    <source>
        <dbReference type="HAMAP-Rule" id="MF_01390"/>
    </source>
</evidence>
<protein>
    <recommendedName>
        <fullName evidence="1">Maturase K</fullName>
    </recommendedName>
    <alternativeName>
        <fullName evidence="1">Intron maturase</fullName>
    </alternativeName>
</protein>
<geneLocation type="chloroplast"/>